<comment type="function">
    <text evidence="1">Catalyzes the transfer of a lysyl group from L-lysyl-tRNA(Lys) to membrane-bound phosphatidylglycerol (PG), which produces lysylphosphatidylglycerol (LPG), a major component of the bacterial membrane with a positive net charge. LPG synthesis contributes to bacterial virulence as it is involved in the resistance mechanism against cationic antimicrobial peptides (CAMP) produces by the host's immune system (defensins, cathelicidins) and by the competing microorganisms (bacteriocins). In fact, the modification of anionic phosphatidylglycerol with positively charged L-lysine results in repulsion of the peptides (By similarity).</text>
</comment>
<comment type="catalytic activity">
    <reaction>
        <text>L-lysyl-tRNA(Lys) + a 1,2-diacyl-sn-glycero-3-phospho-(1'-sn-glycerol) = a 1,2-diacyl-sn-glycero-3-phospho-1'-(3'-O-L-lysyl)-sn-glycerol + tRNA(Lys)</text>
        <dbReference type="Rhea" id="RHEA:10668"/>
        <dbReference type="Rhea" id="RHEA-COMP:9696"/>
        <dbReference type="Rhea" id="RHEA-COMP:9697"/>
        <dbReference type="ChEBI" id="CHEBI:64716"/>
        <dbReference type="ChEBI" id="CHEBI:75792"/>
        <dbReference type="ChEBI" id="CHEBI:78442"/>
        <dbReference type="ChEBI" id="CHEBI:78529"/>
        <dbReference type="EC" id="2.3.2.3"/>
    </reaction>
</comment>
<comment type="subcellular location">
    <subcellularLocation>
        <location>Cell membrane</location>
        <topology>Multi-pass membrane protein</topology>
    </subcellularLocation>
</comment>
<comment type="similarity">
    <text evidence="3">Belongs to the LPG synthase family.</text>
</comment>
<feature type="chain" id="PRO_0000096559" description="Phosphatidylglycerol lysyltransferase">
    <location>
        <begin position="1"/>
        <end position="840"/>
    </location>
</feature>
<feature type="topological domain" description="Cytoplasmic" evidence="2">
    <location>
        <begin position="1"/>
        <end position="8"/>
    </location>
</feature>
<feature type="transmembrane region" description="Helical" evidence="2">
    <location>
        <begin position="9"/>
        <end position="29"/>
    </location>
</feature>
<feature type="topological domain" description="Extracellular" evidence="2">
    <location>
        <begin position="30"/>
        <end position="52"/>
    </location>
</feature>
<feature type="transmembrane region" description="Helical" evidence="2">
    <location>
        <begin position="53"/>
        <end position="73"/>
    </location>
</feature>
<feature type="topological domain" description="Cytoplasmic" evidence="2">
    <location>
        <begin position="74"/>
        <end position="89"/>
    </location>
</feature>
<feature type="transmembrane region" description="Helical" evidence="2">
    <location>
        <begin position="90"/>
        <end position="110"/>
    </location>
</feature>
<feature type="topological domain" description="Extracellular" evidence="2">
    <location>
        <begin position="111"/>
        <end position="128"/>
    </location>
</feature>
<feature type="transmembrane region" description="Helical" evidence="2">
    <location>
        <begin position="129"/>
        <end position="149"/>
    </location>
</feature>
<feature type="topological domain" description="Cytoplasmic" evidence="2">
    <location>
        <begin position="150"/>
        <end position="161"/>
    </location>
</feature>
<feature type="transmembrane region" description="Helical" evidence="2">
    <location>
        <begin position="162"/>
        <end position="182"/>
    </location>
</feature>
<feature type="topological domain" description="Extracellular" evidence="2">
    <location>
        <begin position="183"/>
        <end position="200"/>
    </location>
</feature>
<feature type="transmembrane region" description="Helical" evidence="2">
    <location>
        <begin position="201"/>
        <end position="221"/>
    </location>
</feature>
<feature type="topological domain" description="Cytoplasmic" evidence="2">
    <location>
        <begin position="222"/>
        <end position="229"/>
    </location>
</feature>
<feature type="transmembrane region" description="Helical" evidence="2">
    <location>
        <begin position="230"/>
        <end position="250"/>
    </location>
</feature>
<feature type="topological domain" description="Extracellular" evidence="2">
    <location>
        <begin position="251"/>
        <end position="271"/>
    </location>
</feature>
<feature type="transmembrane region" description="Helical" evidence="2">
    <location>
        <begin position="272"/>
        <end position="292"/>
    </location>
</feature>
<feature type="topological domain" description="Cytoplasmic" evidence="2">
    <location>
        <begin position="293"/>
        <end position="337"/>
    </location>
</feature>
<feature type="transmembrane region" description="Helical" evidence="2">
    <location>
        <begin position="338"/>
        <end position="358"/>
    </location>
</feature>
<feature type="topological domain" description="Extracellular" evidence="2">
    <location>
        <begin position="359"/>
        <end position="369"/>
    </location>
</feature>
<feature type="transmembrane region" description="Helical" evidence="2">
    <location>
        <begin position="370"/>
        <end position="390"/>
    </location>
</feature>
<feature type="topological domain" description="Cytoplasmic" evidence="2">
    <location>
        <begin position="391"/>
        <end position="394"/>
    </location>
</feature>
<feature type="transmembrane region" description="Helical" evidence="2">
    <location>
        <begin position="395"/>
        <end position="415"/>
    </location>
</feature>
<feature type="transmembrane region" description="Helical" evidence="2">
    <location>
        <begin position="416"/>
        <end position="436"/>
    </location>
</feature>
<feature type="topological domain" description="Cytoplasmic" evidence="2">
    <location>
        <begin position="437"/>
        <end position="450"/>
    </location>
</feature>
<feature type="transmembrane region" description="Helical" evidence="2">
    <location>
        <begin position="451"/>
        <end position="471"/>
    </location>
</feature>
<feature type="topological domain" description="Extracellular" evidence="2">
    <location>
        <begin position="472"/>
        <end position="489"/>
    </location>
</feature>
<feature type="transmembrane region" description="Helical" evidence="2">
    <location>
        <begin position="490"/>
        <end position="510"/>
    </location>
</feature>
<feature type="topological domain" description="Cytoplasmic" evidence="2">
    <location>
        <begin position="511"/>
        <end position="840"/>
    </location>
</feature>
<keyword id="KW-0046">Antibiotic resistance</keyword>
<keyword id="KW-1003">Cell membrane</keyword>
<keyword id="KW-0443">Lipid metabolism</keyword>
<keyword id="KW-0472">Membrane</keyword>
<keyword id="KW-0808">Transferase</keyword>
<keyword id="KW-0812">Transmembrane</keyword>
<keyword id="KW-1133">Transmembrane helix</keyword>
<keyword id="KW-0843">Virulence</keyword>
<accession>Q5HG59</accession>
<sequence length="840" mass="96866">MNQEVKNKIFSILKITFATALFIFVAITLYRELSGINFKDTLVEFSKINRMSLVLLFIGGGASLVILSMYDVILSRALKMDISLGKVLRVSYIINALNAIVGFGGFIGAGVRAMVYKNYTHDKKKLVHFISLILISMLTGLSLLSLLIVFHVFDASLILDKITWVRWVLYVVSFFLPLFIIYSMVRPPDKNNRFVGLYCTLVSCVEWLAAAVVLYFCGVIVDAHVSFMSFIAIFIIAALSGLVSFIPGGFGAFDLVVLLGFKTLGVPEEKVLLMLLLYRFAYYFVPVIIALILSSFEFGTSAKKYIEGSKYFIPAKDVTSFLMSYQKDIIAKIPSLSLAILVFFTSMIFFVNNLTIVYDALYDGNHLTYYILLAIHTSACLLLLLNVVGIYKQSRRAIIFAMISILLITVATFFTYASYILITWLAIIFVLLIVAFRRARRLKRPVRMRNIVAMLLFSLFILYVNHIFIAGTLYALDIYTIEMHTSVLRYYFWLTILIIAIIIGMIAWLFDYQFSKVRISSKIEDCEEIINQYGGNYLSHLIYSGDKQFFTNENKTAFLMYRYKASSLVVLGDPLGDENAFDELLEAFYNYAEYLGYDVIFYQVTDQHMPLYHNFGNQFFKLGEEAIIDLTQFSTSGKKRRGFRATLNKFDELNISFEIIEPPFSTEFINELQHVSDLWLDNRQEMHFSVGEFNEEYLSKAPIGVMRNEENEVIAFCSLMPTYFNDAISVDLIRWLPELDLPLMDGLYLHMLLWSKEQGYTKFNMGMATLSNVGQLHYSYLRERLAGRVFEHFNGLYRFQGLRRYKSKYNPNWEPRFLVYRKDNSLWESLSKVMRVIRHK</sequence>
<protein>
    <recommendedName>
        <fullName>Phosphatidylglycerol lysyltransferase</fullName>
        <ecNumber>2.3.2.3</ecNumber>
    </recommendedName>
    <alternativeName>
        <fullName>Lysylphosphatidylglycerol synthase</fullName>
        <shortName>LPG synthase</shortName>
    </alternativeName>
    <alternativeName>
        <fullName>Multiple peptide resistance factor</fullName>
    </alternativeName>
</protein>
<evidence type="ECO:0000250" key="1"/>
<evidence type="ECO:0000255" key="2"/>
<evidence type="ECO:0000305" key="3"/>
<proteinExistence type="inferred from homology"/>
<dbReference type="EC" id="2.3.2.3"/>
<dbReference type="EMBL" id="CP000046">
    <property type="protein sequence ID" value="AAW36644.1"/>
    <property type="molecule type" value="Genomic_DNA"/>
</dbReference>
<dbReference type="RefSeq" id="WP_001071135.1">
    <property type="nucleotide sequence ID" value="NZ_JBGOFO010000003.1"/>
</dbReference>
<dbReference type="SMR" id="Q5HG59"/>
<dbReference type="DNASU" id="3237597"/>
<dbReference type="KEGG" id="sac:SACOL1396"/>
<dbReference type="HOGENOM" id="CLU_008255_7_1_9"/>
<dbReference type="Proteomes" id="UP000000530">
    <property type="component" value="Chromosome"/>
</dbReference>
<dbReference type="GO" id="GO:0005886">
    <property type="term" value="C:plasma membrane"/>
    <property type="evidence" value="ECO:0007669"/>
    <property type="project" value="UniProtKB-SubCell"/>
</dbReference>
<dbReference type="GO" id="GO:0050071">
    <property type="term" value="F:phosphatidylglycerol lysyltransferase activity"/>
    <property type="evidence" value="ECO:0007669"/>
    <property type="project" value="UniProtKB-EC"/>
</dbReference>
<dbReference type="GO" id="GO:0006629">
    <property type="term" value="P:lipid metabolic process"/>
    <property type="evidence" value="ECO:0007669"/>
    <property type="project" value="UniProtKB-KW"/>
</dbReference>
<dbReference type="GO" id="GO:0055091">
    <property type="term" value="P:phospholipid homeostasis"/>
    <property type="evidence" value="ECO:0007669"/>
    <property type="project" value="TreeGrafter"/>
</dbReference>
<dbReference type="GO" id="GO:0046677">
    <property type="term" value="P:response to antibiotic"/>
    <property type="evidence" value="ECO:0007669"/>
    <property type="project" value="UniProtKB-KW"/>
</dbReference>
<dbReference type="InterPro" id="IPR016181">
    <property type="entry name" value="Acyl_CoA_acyltransferase"/>
</dbReference>
<dbReference type="InterPro" id="IPR022791">
    <property type="entry name" value="L-PG_synthase/AglD"/>
</dbReference>
<dbReference type="InterPro" id="IPR024320">
    <property type="entry name" value="LPG_synthase_C"/>
</dbReference>
<dbReference type="InterPro" id="IPR051211">
    <property type="entry name" value="PG_lysyltransferase"/>
</dbReference>
<dbReference type="NCBIfam" id="NF033480">
    <property type="entry name" value="bifunc_MprF"/>
    <property type="match status" value="1"/>
</dbReference>
<dbReference type="NCBIfam" id="TIGR00374">
    <property type="entry name" value="flippase-like domain"/>
    <property type="match status" value="1"/>
</dbReference>
<dbReference type="PANTHER" id="PTHR34697">
    <property type="entry name" value="PHOSPHATIDYLGLYCEROL LYSYLTRANSFERASE"/>
    <property type="match status" value="1"/>
</dbReference>
<dbReference type="PANTHER" id="PTHR34697:SF2">
    <property type="entry name" value="PHOSPHATIDYLGLYCEROL LYSYLTRANSFERASE"/>
    <property type="match status" value="1"/>
</dbReference>
<dbReference type="Pfam" id="PF09924">
    <property type="entry name" value="LPG_synthase_C"/>
    <property type="match status" value="1"/>
</dbReference>
<dbReference type="Pfam" id="PF03706">
    <property type="entry name" value="LPG_synthase_TM"/>
    <property type="match status" value="1"/>
</dbReference>
<dbReference type="SUPFAM" id="SSF55729">
    <property type="entry name" value="Acyl-CoA N-acyltransferases (Nat)"/>
    <property type="match status" value="1"/>
</dbReference>
<gene>
    <name type="primary">mprF</name>
    <name type="ordered locus">SACOL1396</name>
</gene>
<name>MPRF_STAAC</name>
<organism>
    <name type="scientific">Staphylococcus aureus (strain COL)</name>
    <dbReference type="NCBI Taxonomy" id="93062"/>
    <lineage>
        <taxon>Bacteria</taxon>
        <taxon>Bacillati</taxon>
        <taxon>Bacillota</taxon>
        <taxon>Bacilli</taxon>
        <taxon>Bacillales</taxon>
        <taxon>Staphylococcaceae</taxon>
        <taxon>Staphylococcus</taxon>
    </lineage>
</organism>
<reference key="1">
    <citation type="journal article" date="2005" name="J. Bacteriol.">
        <title>Insights on evolution of virulence and resistance from the complete genome analysis of an early methicillin-resistant Staphylococcus aureus strain and a biofilm-producing methicillin-resistant Staphylococcus epidermidis strain.</title>
        <authorList>
            <person name="Gill S.R."/>
            <person name="Fouts D.E."/>
            <person name="Archer G.L."/>
            <person name="Mongodin E.F."/>
            <person name="DeBoy R.T."/>
            <person name="Ravel J."/>
            <person name="Paulsen I.T."/>
            <person name="Kolonay J.F."/>
            <person name="Brinkac L.M."/>
            <person name="Beanan M.J."/>
            <person name="Dodson R.J."/>
            <person name="Daugherty S.C."/>
            <person name="Madupu R."/>
            <person name="Angiuoli S.V."/>
            <person name="Durkin A.S."/>
            <person name="Haft D.H."/>
            <person name="Vamathevan J.J."/>
            <person name="Khouri H."/>
            <person name="Utterback T.R."/>
            <person name="Lee C."/>
            <person name="Dimitrov G."/>
            <person name="Jiang L."/>
            <person name="Qin H."/>
            <person name="Weidman J."/>
            <person name="Tran K."/>
            <person name="Kang K.H."/>
            <person name="Hance I.R."/>
            <person name="Nelson K.E."/>
            <person name="Fraser C.M."/>
        </authorList>
    </citation>
    <scope>NUCLEOTIDE SEQUENCE [LARGE SCALE GENOMIC DNA]</scope>
    <source>
        <strain>COL</strain>
    </source>
</reference>